<proteinExistence type="inferred from homology"/>
<keyword id="KW-0450">Lipoyl</keyword>
<sequence>MLKFTEEHEWLKIDGDVATVGITEHAAGQLGDLVFVELPEAGSTFSKGDTAATVESVKAASDVYCPLDGEIVEANQAIVDDPSLVNSDPQGAAWFFKLKLADPDAAKALLDEAAYKELVA</sequence>
<feature type="chain" id="PRO_1000022203" description="Glycine cleavage system H protein">
    <location>
        <begin position="1"/>
        <end position="120"/>
    </location>
</feature>
<feature type="domain" description="Lipoyl-binding" evidence="2">
    <location>
        <begin position="17"/>
        <end position="99"/>
    </location>
</feature>
<feature type="modified residue" description="N6-lipoyllysine" evidence="1">
    <location>
        <position position="58"/>
    </location>
</feature>
<dbReference type="EMBL" id="CP000738">
    <property type="protein sequence ID" value="ABR60034.1"/>
    <property type="molecule type" value="Genomic_DNA"/>
</dbReference>
<dbReference type="RefSeq" id="WP_011975352.1">
    <property type="nucleotide sequence ID" value="NC_009636.1"/>
</dbReference>
<dbReference type="RefSeq" id="YP_001326869.1">
    <property type="nucleotide sequence ID" value="NC_009636.1"/>
</dbReference>
<dbReference type="SMR" id="A6U8Q4"/>
<dbReference type="STRING" id="366394.Smed_1183"/>
<dbReference type="GeneID" id="61612036"/>
<dbReference type="KEGG" id="smd:Smed_1183"/>
<dbReference type="PATRIC" id="fig|366394.8.peg.4311"/>
<dbReference type="eggNOG" id="COG0509">
    <property type="taxonomic scope" value="Bacteria"/>
</dbReference>
<dbReference type="HOGENOM" id="CLU_097408_2_0_5"/>
<dbReference type="OrthoDB" id="9796712at2"/>
<dbReference type="Proteomes" id="UP000001108">
    <property type="component" value="Chromosome"/>
</dbReference>
<dbReference type="GO" id="GO:0005737">
    <property type="term" value="C:cytoplasm"/>
    <property type="evidence" value="ECO:0007669"/>
    <property type="project" value="TreeGrafter"/>
</dbReference>
<dbReference type="GO" id="GO:0005960">
    <property type="term" value="C:glycine cleavage complex"/>
    <property type="evidence" value="ECO:0007669"/>
    <property type="project" value="InterPro"/>
</dbReference>
<dbReference type="GO" id="GO:0019464">
    <property type="term" value="P:glycine decarboxylation via glycine cleavage system"/>
    <property type="evidence" value="ECO:0007669"/>
    <property type="project" value="UniProtKB-UniRule"/>
</dbReference>
<dbReference type="CDD" id="cd06848">
    <property type="entry name" value="GCS_H"/>
    <property type="match status" value="1"/>
</dbReference>
<dbReference type="Gene3D" id="2.40.50.100">
    <property type="match status" value="1"/>
</dbReference>
<dbReference type="HAMAP" id="MF_00272">
    <property type="entry name" value="GcvH"/>
    <property type="match status" value="1"/>
</dbReference>
<dbReference type="InterPro" id="IPR003016">
    <property type="entry name" value="2-oxoA_DH_lipoyl-BS"/>
</dbReference>
<dbReference type="InterPro" id="IPR000089">
    <property type="entry name" value="Biotin_lipoyl"/>
</dbReference>
<dbReference type="InterPro" id="IPR002930">
    <property type="entry name" value="GCV_H"/>
</dbReference>
<dbReference type="InterPro" id="IPR033753">
    <property type="entry name" value="GCV_H/Fam206"/>
</dbReference>
<dbReference type="InterPro" id="IPR017453">
    <property type="entry name" value="GCV_H_sub"/>
</dbReference>
<dbReference type="InterPro" id="IPR011053">
    <property type="entry name" value="Single_hybrid_motif"/>
</dbReference>
<dbReference type="NCBIfam" id="TIGR00527">
    <property type="entry name" value="gcvH"/>
    <property type="match status" value="1"/>
</dbReference>
<dbReference type="NCBIfam" id="NF002270">
    <property type="entry name" value="PRK01202.1"/>
    <property type="match status" value="1"/>
</dbReference>
<dbReference type="PANTHER" id="PTHR11715">
    <property type="entry name" value="GLYCINE CLEAVAGE SYSTEM H PROTEIN"/>
    <property type="match status" value="1"/>
</dbReference>
<dbReference type="PANTHER" id="PTHR11715:SF3">
    <property type="entry name" value="GLYCINE CLEAVAGE SYSTEM H PROTEIN-RELATED"/>
    <property type="match status" value="1"/>
</dbReference>
<dbReference type="Pfam" id="PF01597">
    <property type="entry name" value="GCV_H"/>
    <property type="match status" value="1"/>
</dbReference>
<dbReference type="SUPFAM" id="SSF51230">
    <property type="entry name" value="Single hybrid motif"/>
    <property type="match status" value="1"/>
</dbReference>
<dbReference type="PROSITE" id="PS50968">
    <property type="entry name" value="BIOTINYL_LIPOYL"/>
    <property type="match status" value="1"/>
</dbReference>
<dbReference type="PROSITE" id="PS00189">
    <property type="entry name" value="LIPOYL"/>
    <property type="match status" value="1"/>
</dbReference>
<protein>
    <recommendedName>
        <fullName evidence="1">Glycine cleavage system H protein</fullName>
    </recommendedName>
</protein>
<organism>
    <name type="scientific">Sinorhizobium medicae (strain WSM419)</name>
    <name type="common">Ensifer medicae</name>
    <dbReference type="NCBI Taxonomy" id="366394"/>
    <lineage>
        <taxon>Bacteria</taxon>
        <taxon>Pseudomonadati</taxon>
        <taxon>Pseudomonadota</taxon>
        <taxon>Alphaproteobacteria</taxon>
        <taxon>Hyphomicrobiales</taxon>
        <taxon>Rhizobiaceae</taxon>
        <taxon>Sinorhizobium/Ensifer group</taxon>
        <taxon>Sinorhizobium</taxon>
    </lineage>
</organism>
<name>GCSH_SINMW</name>
<evidence type="ECO:0000255" key="1">
    <source>
        <dbReference type="HAMAP-Rule" id="MF_00272"/>
    </source>
</evidence>
<evidence type="ECO:0000255" key="2">
    <source>
        <dbReference type="PROSITE-ProRule" id="PRU01066"/>
    </source>
</evidence>
<gene>
    <name evidence="1" type="primary">gcvH</name>
    <name type="ordered locus">Smed_1183</name>
</gene>
<reference key="1">
    <citation type="submission" date="2007-06" db="EMBL/GenBank/DDBJ databases">
        <title>Complete sequence of Sinorhizobium medicae WSM419 chromosome.</title>
        <authorList>
            <consortium name="US DOE Joint Genome Institute"/>
            <person name="Copeland A."/>
            <person name="Lucas S."/>
            <person name="Lapidus A."/>
            <person name="Barry K."/>
            <person name="Glavina del Rio T."/>
            <person name="Dalin E."/>
            <person name="Tice H."/>
            <person name="Pitluck S."/>
            <person name="Chain P."/>
            <person name="Malfatti S."/>
            <person name="Shin M."/>
            <person name="Vergez L."/>
            <person name="Schmutz J."/>
            <person name="Larimer F."/>
            <person name="Land M."/>
            <person name="Hauser L."/>
            <person name="Kyrpides N."/>
            <person name="Mikhailova N."/>
            <person name="Reeve W.G."/>
            <person name="Richardson P."/>
        </authorList>
    </citation>
    <scope>NUCLEOTIDE SEQUENCE [LARGE SCALE GENOMIC DNA]</scope>
    <source>
        <strain>WSM419</strain>
    </source>
</reference>
<accession>A6U8Q4</accession>
<comment type="function">
    <text evidence="1">The glycine cleavage system catalyzes the degradation of glycine. The H protein shuttles the methylamine group of glycine from the P protein to the T protein.</text>
</comment>
<comment type="cofactor">
    <cofactor evidence="1">
        <name>(R)-lipoate</name>
        <dbReference type="ChEBI" id="CHEBI:83088"/>
    </cofactor>
    <text evidence="1">Binds 1 lipoyl cofactor covalently.</text>
</comment>
<comment type="subunit">
    <text evidence="1">The glycine cleavage system is composed of four proteins: P, T, L and H.</text>
</comment>
<comment type="similarity">
    <text evidence="1">Belongs to the GcvH family.</text>
</comment>